<dbReference type="EMBL" id="AP009240">
    <property type="protein sequence ID" value="BAG77306.1"/>
    <property type="molecule type" value="Genomic_DNA"/>
</dbReference>
<dbReference type="RefSeq" id="WP_000190982.1">
    <property type="nucleotide sequence ID" value="NC_011415.1"/>
</dbReference>
<dbReference type="SMR" id="B6IB98"/>
<dbReference type="GeneID" id="75204504"/>
<dbReference type="KEGG" id="ecy:ECSE_1782"/>
<dbReference type="HOGENOM" id="CLU_037628_6_2_6"/>
<dbReference type="UniPathway" id="UPA00488"/>
<dbReference type="Proteomes" id="UP000008199">
    <property type="component" value="Chromosome"/>
</dbReference>
<dbReference type="GO" id="GO:0003700">
    <property type="term" value="F:DNA-binding transcription factor activity"/>
    <property type="evidence" value="ECO:0007669"/>
    <property type="project" value="TreeGrafter"/>
</dbReference>
<dbReference type="GO" id="GO:0000976">
    <property type="term" value="F:transcription cis-regulatory region binding"/>
    <property type="evidence" value="ECO:0007669"/>
    <property type="project" value="TreeGrafter"/>
</dbReference>
<dbReference type="GO" id="GO:0045892">
    <property type="term" value="P:negative regulation of DNA-templated transcription"/>
    <property type="evidence" value="ECO:0007669"/>
    <property type="project" value="UniProtKB-UniRule"/>
</dbReference>
<dbReference type="GO" id="GO:0006164">
    <property type="term" value="P:purine nucleotide biosynthetic process"/>
    <property type="evidence" value="ECO:0007669"/>
    <property type="project" value="UniProtKB-UniPathway"/>
</dbReference>
<dbReference type="CDD" id="cd01392">
    <property type="entry name" value="HTH_LacI"/>
    <property type="match status" value="1"/>
</dbReference>
<dbReference type="CDD" id="cd06275">
    <property type="entry name" value="PBP1_PurR"/>
    <property type="match status" value="1"/>
</dbReference>
<dbReference type="FunFam" id="1.10.260.40:FF:000002">
    <property type="entry name" value="HTH-type transcriptional repressor PurR"/>
    <property type="match status" value="1"/>
</dbReference>
<dbReference type="FunFam" id="3.40.50.2300:FF:000045">
    <property type="entry name" value="HTH-type transcriptional repressor PurR"/>
    <property type="match status" value="1"/>
</dbReference>
<dbReference type="Gene3D" id="3.40.50.2300">
    <property type="match status" value="2"/>
</dbReference>
<dbReference type="Gene3D" id="1.10.260.40">
    <property type="entry name" value="lambda repressor-like DNA-binding domains"/>
    <property type="match status" value="1"/>
</dbReference>
<dbReference type="HAMAP" id="MF_01277">
    <property type="entry name" value="HTH_type_PurR"/>
    <property type="match status" value="1"/>
</dbReference>
<dbReference type="InterPro" id="IPR000843">
    <property type="entry name" value="HTH_LacI"/>
</dbReference>
<dbReference type="InterPro" id="IPR046335">
    <property type="entry name" value="LacI/GalR-like_sensor"/>
</dbReference>
<dbReference type="InterPro" id="IPR010982">
    <property type="entry name" value="Lambda_DNA-bd_dom_sf"/>
</dbReference>
<dbReference type="InterPro" id="IPR028082">
    <property type="entry name" value="Peripla_BP_I"/>
</dbReference>
<dbReference type="InterPro" id="IPR023588">
    <property type="entry name" value="Tscrpt_reg_HTH_PurR"/>
</dbReference>
<dbReference type="NCBIfam" id="NF007979">
    <property type="entry name" value="PRK10703.1"/>
    <property type="match status" value="1"/>
</dbReference>
<dbReference type="PANTHER" id="PTHR30146:SF148">
    <property type="entry name" value="HTH-TYPE TRANSCRIPTIONAL REPRESSOR PURR-RELATED"/>
    <property type="match status" value="1"/>
</dbReference>
<dbReference type="PANTHER" id="PTHR30146">
    <property type="entry name" value="LACI-RELATED TRANSCRIPTIONAL REPRESSOR"/>
    <property type="match status" value="1"/>
</dbReference>
<dbReference type="Pfam" id="PF00356">
    <property type="entry name" value="LacI"/>
    <property type="match status" value="1"/>
</dbReference>
<dbReference type="Pfam" id="PF13377">
    <property type="entry name" value="Peripla_BP_3"/>
    <property type="match status" value="1"/>
</dbReference>
<dbReference type="PRINTS" id="PR00036">
    <property type="entry name" value="HTHLACI"/>
</dbReference>
<dbReference type="SMART" id="SM00354">
    <property type="entry name" value="HTH_LACI"/>
    <property type="match status" value="1"/>
</dbReference>
<dbReference type="SUPFAM" id="SSF47413">
    <property type="entry name" value="lambda repressor-like DNA-binding domains"/>
    <property type="match status" value="1"/>
</dbReference>
<dbReference type="SUPFAM" id="SSF53822">
    <property type="entry name" value="Periplasmic binding protein-like I"/>
    <property type="match status" value="1"/>
</dbReference>
<dbReference type="PROSITE" id="PS00356">
    <property type="entry name" value="HTH_LACI_1"/>
    <property type="match status" value="1"/>
</dbReference>
<dbReference type="PROSITE" id="PS50932">
    <property type="entry name" value="HTH_LACI_2"/>
    <property type="match status" value="1"/>
</dbReference>
<organism>
    <name type="scientific">Escherichia coli (strain SE11)</name>
    <dbReference type="NCBI Taxonomy" id="409438"/>
    <lineage>
        <taxon>Bacteria</taxon>
        <taxon>Pseudomonadati</taxon>
        <taxon>Pseudomonadota</taxon>
        <taxon>Gammaproteobacteria</taxon>
        <taxon>Enterobacterales</taxon>
        <taxon>Enterobacteriaceae</taxon>
        <taxon>Escherichia</taxon>
    </lineage>
</organism>
<comment type="function">
    <text evidence="1">Is the main repressor of the genes involved in the de novo synthesis of purine nucleotides, regulating purB, purC, purEK, purF, purHD, purL, purMN and guaBA expression. PurR is allosterically activated to bind its cognate DNA by binding the purine corepressors, hypoxanthine or guanine, thereby effecting transcription repression.</text>
</comment>
<comment type="pathway">
    <text>Purine metabolism; purine nucleotide biosynthesis [regulation].</text>
</comment>
<comment type="subunit">
    <text evidence="1">Homodimer.</text>
</comment>
<comment type="domain">
    <text evidence="1">Consists of two structural and functional domains: an N-terminal DNA-binding domain, approximately the first 60 residues, and a larger C-terminal domain, approximately 280 residues, which imparts the function of corepressor binding and oligomerization.</text>
</comment>
<feature type="chain" id="PRO_1000140291" description="HTH-type transcriptional repressor PurR">
    <location>
        <begin position="1"/>
        <end position="341"/>
    </location>
</feature>
<feature type="domain" description="HTH lacI-type" evidence="1">
    <location>
        <begin position="2"/>
        <end position="56"/>
    </location>
</feature>
<feature type="DNA-binding region" description="H-T-H motif" evidence="1">
    <location>
        <begin position="4"/>
        <end position="23"/>
    </location>
</feature>
<feature type="DNA-binding region" evidence="1">
    <location>
        <begin position="48"/>
        <end position="56"/>
    </location>
</feature>
<feature type="binding site" evidence="1">
    <location>
        <position position="73"/>
    </location>
    <ligand>
        <name>hypoxanthine</name>
        <dbReference type="ChEBI" id="CHEBI:17368"/>
    </ligand>
</feature>
<feature type="binding site" evidence="1">
    <location>
        <position position="190"/>
    </location>
    <ligand>
        <name>hypoxanthine</name>
        <dbReference type="ChEBI" id="CHEBI:17368"/>
    </ligand>
</feature>
<feature type="binding site" evidence="1">
    <location>
        <position position="192"/>
    </location>
    <ligand>
        <name>hypoxanthine</name>
        <dbReference type="ChEBI" id="CHEBI:17368"/>
    </ligand>
</feature>
<feature type="binding site" evidence="1">
    <location>
        <position position="221"/>
    </location>
    <ligand>
        <name>hypoxanthine</name>
        <dbReference type="ChEBI" id="CHEBI:17368"/>
    </ligand>
</feature>
<feature type="binding site" evidence="1">
    <location>
        <position position="275"/>
    </location>
    <ligand>
        <name>hypoxanthine</name>
        <dbReference type="ChEBI" id="CHEBI:17368"/>
    </ligand>
</feature>
<keyword id="KW-0238">DNA-binding</keyword>
<keyword id="KW-0658">Purine biosynthesis</keyword>
<keyword id="KW-0678">Repressor</keyword>
<keyword id="KW-0804">Transcription</keyword>
<keyword id="KW-0805">Transcription regulation</keyword>
<accession>B6IB98</accession>
<gene>
    <name evidence="1" type="primary">purR</name>
    <name type="ordered locus">ECSE_1782</name>
</gene>
<sequence>MATIKDVAKRANVSTTTVSHVINKTRFVAEETRNAVWAAIKELHYSPSAVARSLKVNHTKSIGLLATSSEAAYFAEIIEAVEKNCFQKGYTLILGNAWNNLEKQRAYLSMMAQKRVDGLLVMCSEYPEPLLAMLEEYRHIPMVVMDWGEAKADFTDAVIDNAFEGGYMAGRYLIERGHREIGVIPGPLERNTGAGRLAGFMKAMEEAMIKVPESWIVQGDFEPESGYRAMQQILSQPHRPTAVFCGGDIMAMGALCAADEMGLRVPQDVSLIGYDNVRNARYFTPALTTIHQPKDSLGETAFNMLLDRIVNKREEPQSIEVHPRLIERRSVADGPFRDYRR</sequence>
<name>PURR_ECOSE</name>
<reference key="1">
    <citation type="journal article" date="2008" name="DNA Res.">
        <title>Complete genome sequence and comparative analysis of the wild-type commensal Escherichia coli strain SE11 isolated from a healthy adult.</title>
        <authorList>
            <person name="Oshima K."/>
            <person name="Toh H."/>
            <person name="Ogura Y."/>
            <person name="Sasamoto H."/>
            <person name="Morita H."/>
            <person name="Park S.-H."/>
            <person name="Ooka T."/>
            <person name="Iyoda S."/>
            <person name="Taylor T.D."/>
            <person name="Hayashi T."/>
            <person name="Itoh K."/>
            <person name="Hattori M."/>
        </authorList>
    </citation>
    <scope>NUCLEOTIDE SEQUENCE [LARGE SCALE GENOMIC DNA]</scope>
    <source>
        <strain>SE11</strain>
    </source>
</reference>
<protein>
    <recommendedName>
        <fullName evidence="1">HTH-type transcriptional repressor PurR</fullName>
    </recommendedName>
    <alternativeName>
        <fullName evidence="1">Pur regulon repressor</fullName>
    </alternativeName>
    <alternativeName>
        <fullName evidence="1">Purine nucleotide synthesis repressor</fullName>
    </alternativeName>
</protein>
<proteinExistence type="inferred from homology"/>
<evidence type="ECO:0000255" key="1">
    <source>
        <dbReference type="HAMAP-Rule" id="MF_01277"/>
    </source>
</evidence>